<proteinExistence type="inferred from homology"/>
<organism>
    <name type="scientific">Nitratidesulfovibrio vulgaris (strain DP4)</name>
    <name type="common">Desulfovibrio vulgaris</name>
    <dbReference type="NCBI Taxonomy" id="391774"/>
    <lineage>
        <taxon>Bacteria</taxon>
        <taxon>Pseudomonadati</taxon>
        <taxon>Thermodesulfobacteriota</taxon>
        <taxon>Desulfovibrionia</taxon>
        <taxon>Desulfovibrionales</taxon>
        <taxon>Desulfovibrionaceae</taxon>
        <taxon>Nitratidesulfovibrio</taxon>
    </lineage>
</organism>
<name>HIS8_NITV4</name>
<protein>
    <recommendedName>
        <fullName evidence="1">Histidinol-phosphate aminotransferase</fullName>
        <ecNumber evidence="1">2.6.1.9</ecNumber>
    </recommendedName>
    <alternativeName>
        <fullName evidence="1">Imidazole acetol-phosphate transaminase</fullName>
    </alternativeName>
</protein>
<reference key="1">
    <citation type="journal article" date="2009" name="Environ. Microbiol.">
        <title>Contribution of mobile genetic elements to Desulfovibrio vulgaris genome plasticity.</title>
        <authorList>
            <person name="Walker C.B."/>
            <person name="Stolyar S."/>
            <person name="Chivian D."/>
            <person name="Pinel N."/>
            <person name="Gabster J.A."/>
            <person name="Dehal P.S."/>
            <person name="He Z."/>
            <person name="Yang Z.K."/>
            <person name="Yen H.C."/>
            <person name="Zhou J."/>
            <person name="Wall J.D."/>
            <person name="Hazen T.C."/>
            <person name="Arkin A.P."/>
            <person name="Stahl D.A."/>
        </authorList>
    </citation>
    <scope>NUCLEOTIDE SEQUENCE [LARGE SCALE GENOMIC DNA]</scope>
    <source>
        <strain>DP4</strain>
    </source>
</reference>
<sequence length="373" mass="41224">MTAPSMSRPDDVRPEVLDFKPYVPGLSIDEIRDRFGLADVVKLASNENPLGTSPVVQRTLKTKADLAFRYAQSGNPRLTRAIAAHHGVAPERVVAGNGSDEIIDLLIRVRATPGKHNIVAFRPCFSIYELQAKFCGLEFRQADLRPDFTFDWDAFLAATDENTAIAFVTTPDNPSGWCPPVSELEHVARTLPPSCLFVIDEAYMDFCGDEAAHSLLSRLDAFPNIAVLRTFSKSFGLAGLRLGYGILPERLADYLHRVRLPFSVNILAEEAGLAALEDTVFRSETLRVTAEGRAYIAEGLTALGCEVLPSWANFIMFRPPTDATDLFEALLRRGIIIRPLKSYGLPQHLRVSMGNADENRRFIAACKEILPHA</sequence>
<keyword id="KW-0028">Amino-acid biosynthesis</keyword>
<keyword id="KW-0032">Aminotransferase</keyword>
<keyword id="KW-0368">Histidine biosynthesis</keyword>
<keyword id="KW-0663">Pyridoxal phosphate</keyword>
<keyword id="KW-0808">Transferase</keyword>
<dbReference type="EC" id="2.6.1.9" evidence="1"/>
<dbReference type="EMBL" id="CP000527">
    <property type="protein sequence ID" value="ABM28980.1"/>
    <property type="molecule type" value="Genomic_DNA"/>
</dbReference>
<dbReference type="RefSeq" id="WP_011792575.1">
    <property type="nucleotide sequence ID" value="NC_008751.1"/>
</dbReference>
<dbReference type="SMR" id="A1VEW4"/>
<dbReference type="KEGG" id="dvl:Dvul_1964"/>
<dbReference type="HOGENOM" id="CLU_017584_3_3_7"/>
<dbReference type="UniPathway" id="UPA00031">
    <property type="reaction ID" value="UER00012"/>
</dbReference>
<dbReference type="Proteomes" id="UP000009173">
    <property type="component" value="Chromosome"/>
</dbReference>
<dbReference type="GO" id="GO:0004400">
    <property type="term" value="F:histidinol-phosphate transaminase activity"/>
    <property type="evidence" value="ECO:0007669"/>
    <property type="project" value="UniProtKB-UniRule"/>
</dbReference>
<dbReference type="GO" id="GO:0030170">
    <property type="term" value="F:pyridoxal phosphate binding"/>
    <property type="evidence" value="ECO:0007669"/>
    <property type="project" value="InterPro"/>
</dbReference>
<dbReference type="GO" id="GO:0000105">
    <property type="term" value="P:L-histidine biosynthetic process"/>
    <property type="evidence" value="ECO:0007669"/>
    <property type="project" value="UniProtKB-UniRule"/>
</dbReference>
<dbReference type="CDD" id="cd00609">
    <property type="entry name" value="AAT_like"/>
    <property type="match status" value="1"/>
</dbReference>
<dbReference type="Gene3D" id="3.90.1150.10">
    <property type="entry name" value="Aspartate Aminotransferase, domain 1"/>
    <property type="match status" value="1"/>
</dbReference>
<dbReference type="Gene3D" id="3.40.640.10">
    <property type="entry name" value="Type I PLP-dependent aspartate aminotransferase-like (Major domain)"/>
    <property type="match status" value="1"/>
</dbReference>
<dbReference type="HAMAP" id="MF_01023">
    <property type="entry name" value="HisC_aminotrans_2"/>
    <property type="match status" value="1"/>
</dbReference>
<dbReference type="InterPro" id="IPR001917">
    <property type="entry name" value="Aminotrans_II_pyridoxalP_BS"/>
</dbReference>
<dbReference type="InterPro" id="IPR004839">
    <property type="entry name" value="Aminotransferase_I/II_large"/>
</dbReference>
<dbReference type="InterPro" id="IPR005861">
    <property type="entry name" value="HisP_aminotrans"/>
</dbReference>
<dbReference type="InterPro" id="IPR050106">
    <property type="entry name" value="HistidinolP_aminotransfase"/>
</dbReference>
<dbReference type="InterPro" id="IPR015424">
    <property type="entry name" value="PyrdxlP-dep_Trfase"/>
</dbReference>
<dbReference type="InterPro" id="IPR015421">
    <property type="entry name" value="PyrdxlP-dep_Trfase_major"/>
</dbReference>
<dbReference type="InterPro" id="IPR015422">
    <property type="entry name" value="PyrdxlP-dep_Trfase_small"/>
</dbReference>
<dbReference type="NCBIfam" id="TIGR01141">
    <property type="entry name" value="hisC"/>
    <property type="match status" value="1"/>
</dbReference>
<dbReference type="PANTHER" id="PTHR43643:SF3">
    <property type="entry name" value="HISTIDINOL-PHOSPHATE AMINOTRANSFERASE"/>
    <property type="match status" value="1"/>
</dbReference>
<dbReference type="PANTHER" id="PTHR43643">
    <property type="entry name" value="HISTIDINOL-PHOSPHATE AMINOTRANSFERASE 2"/>
    <property type="match status" value="1"/>
</dbReference>
<dbReference type="Pfam" id="PF00155">
    <property type="entry name" value="Aminotran_1_2"/>
    <property type="match status" value="1"/>
</dbReference>
<dbReference type="SUPFAM" id="SSF53383">
    <property type="entry name" value="PLP-dependent transferases"/>
    <property type="match status" value="1"/>
</dbReference>
<dbReference type="PROSITE" id="PS00599">
    <property type="entry name" value="AA_TRANSFER_CLASS_2"/>
    <property type="match status" value="1"/>
</dbReference>
<comment type="catalytic activity">
    <reaction evidence="1">
        <text>L-histidinol phosphate + 2-oxoglutarate = 3-(imidazol-4-yl)-2-oxopropyl phosphate + L-glutamate</text>
        <dbReference type="Rhea" id="RHEA:23744"/>
        <dbReference type="ChEBI" id="CHEBI:16810"/>
        <dbReference type="ChEBI" id="CHEBI:29985"/>
        <dbReference type="ChEBI" id="CHEBI:57766"/>
        <dbReference type="ChEBI" id="CHEBI:57980"/>
        <dbReference type="EC" id="2.6.1.9"/>
    </reaction>
</comment>
<comment type="cofactor">
    <cofactor evidence="1">
        <name>pyridoxal 5'-phosphate</name>
        <dbReference type="ChEBI" id="CHEBI:597326"/>
    </cofactor>
</comment>
<comment type="pathway">
    <text evidence="1">Amino-acid biosynthesis; L-histidine biosynthesis; L-histidine from 5-phospho-alpha-D-ribose 1-diphosphate: step 7/9.</text>
</comment>
<comment type="subunit">
    <text evidence="1">Homodimer.</text>
</comment>
<comment type="similarity">
    <text evidence="1">Belongs to the class-II pyridoxal-phosphate-dependent aminotransferase family. Histidinol-phosphate aminotransferase subfamily.</text>
</comment>
<gene>
    <name evidence="1" type="primary">hisC</name>
    <name type="ordered locus">Dvul_1964</name>
</gene>
<evidence type="ECO:0000255" key="1">
    <source>
        <dbReference type="HAMAP-Rule" id="MF_01023"/>
    </source>
</evidence>
<feature type="chain" id="PRO_1000063472" description="Histidinol-phosphate aminotransferase">
    <location>
        <begin position="1"/>
        <end position="373"/>
    </location>
</feature>
<feature type="modified residue" description="N6-(pyridoxal phosphate)lysine" evidence="1">
    <location>
        <position position="233"/>
    </location>
</feature>
<accession>A1VEW4</accession>